<gene>
    <name type="ordered locus">spyM18_2163</name>
</gene>
<accession>Q8NZ37</accession>
<comment type="similarity">
    <text evidence="1">Belongs to the UPF0246 family.</text>
</comment>
<feature type="chain" id="PRO_0000204014" description="UPF0246 protein spyM18_2163">
    <location>
        <begin position="1"/>
        <end position="243"/>
    </location>
</feature>
<proteinExistence type="inferred from homology"/>
<evidence type="ECO:0000255" key="1">
    <source>
        <dbReference type="HAMAP-Rule" id="MF_00652"/>
    </source>
</evidence>
<organism>
    <name type="scientific">Streptococcus pyogenes serotype M18 (strain MGAS8232)</name>
    <dbReference type="NCBI Taxonomy" id="186103"/>
    <lineage>
        <taxon>Bacteria</taxon>
        <taxon>Bacillati</taxon>
        <taxon>Bacillota</taxon>
        <taxon>Bacilli</taxon>
        <taxon>Lactobacillales</taxon>
        <taxon>Streptococcaceae</taxon>
        <taxon>Streptococcus</taxon>
    </lineage>
</organism>
<name>Y2163_STRP8</name>
<protein>
    <recommendedName>
        <fullName evidence="1">UPF0246 protein spyM18_2163</fullName>
    </recommendedName>
</protein>
<dbReference type="EMBL" id="AE009949">
    <property type="protein sequence ID" value="AAL98607.1"/>
    <property type="molecule type" value="Genomic_DNA"/>
</dbReference>
<dbReference type="SMR" id="Q8NZ37"/>
<dbReference type="KEGG" id="spm:spyM18_2163"/>
<dbReference type="HOGENOM" id="CLU_061989_2_1_9"/>
<dbReference type="GO" id="GO:0005829">
    <property type="term" value="C:cytosol"/>
    <property type="evidence" value="ECO:0007669"/>
    <property type="project" value="TreeGrafter"/>
</dbReference>
<dbReference type="GO" id="GO:0033194">
    <property type="term" value="P:response to hydroperoxide"/>
    <property type="evidence" value="ECO:0007669"/>
    <property type="project" value="TreeGrafter"/>
</dbReference>
<dbReference type="HAMAP" id="MF_00652">
    <property type="entry name" value="UPF0246"/>
    <property type="match status" value="1"/>
</dbReference>
<dbReference type="InterPro" id="IPR005583">
    <property type="entry name" value="YaaA"/>
</dbReference>
<dbReference type="NCBIfam" id="NF002543">
    <property type="entry name" value="PRK02101.1-4"/>
    <property type="match status" value="1"/>
</dbReference>
<dbReference type="PANTHER" id="PTHR30283:SF4">
    <property type="entry name" value="PEROXIDE STRESS RESISTANCE PROTEIN YAAA"/>
    <property type="match status" value="1"/>
</dbReference>
<dbReference type="PANTHER" id="PTHR30283">
    <property type="entry name" value="PEROXIDE STRESS RESPONSE PROTEIN YAAA"/>
    <property type="match status" value="1"/>
</dbReference>
<dbReference type="Pfam" id="PF03883">
    <property type="entry name" value="H2O2_YaaD"/>
    <property type="match status" value="1"/>
</dbReference>
<reference key="1">
    <citation type="journal article" date="2002" name="Proc. Natl. Acad. Sci. U.S.A.">
        <title>Genome sequence and comparative microarray analysis of serotype M18 group A Streptococcus strains associated with acute rheumatic fever outbreaks.</title>
        <authorList>
            <person name="Smoot J.C."/>
            <person name="Barbian K.D."/>
            <person name="Van Gompel J.J."/>
            <person name="Smoot L.M."/>
            <person name="Chaussee M.S."/>
            <person name="Sylva G.L."/>
            <person name="Sturdevant D.E."/>
            <person name="Ricklefs S.M."/>
            <person name="Porcella S.F."/>
            <person name="Parkins L.D."/>
            <person name="Beres S.B."/>
            <person name="Campbell D.S."/>
            <person name="Smith T.M."/>
            <person name="Zhang Q."/>
            <person name="Kapur V."/>
            <person name="Daly J.A."/>
            <person name="Veasy L.G."/>
            <person name="Musser J.M."/>
        </authorList>
    </citation>
    <scope>NUCLEOTIDE SEQUENCE [LARGE SCALE GENOMIC DNA]</scope>
    <source>
        <strain>MGAS8232</strain>
    </source>
</reference>
<sequence length="243" mass="28273">MLTFLIPTAKEMTTPKESHPHLLPQDSQAILKIMTAMTTEDLAKSYRIKEEAAKKEQQRWQDMASQQSLAYPAYQLFNGLMYRHIKRDKLTTQEQAYLTQQVYITSSFYGIIPANHPIAEHRHDFHTRIKIEGQSLKSYWRPCYNQFAKEHPQVISLLSSEFDDVFSKDCKQLWISPKFMAEKEGQFKTHSTISKKARGAFLTACMENNCQTVDSLKSLVFAGFYYHPDLSTDHEFVYIKKEA</sequence>